<accession>Q9ZE70</accession>
<reference key="1">
    <citation type="journal article" date="2003" name="J. Bacteriol.">
        <title>S-adenosylmethionine transport in Rickettsia prowazekii.</title>
        <authorList>
            <person name="Tucker A.M."/>
            <person name="Winkler H.H."/>
            <person name="Driskell L.O."/>
            <person name="Wood D.O."/>
        </authorList>
    </citation>
    <scope>NUCLEOTIDE SEQUENCE [GENOMIC DNA]</scope>
    <scope>FUNCTION</scope>
    <scope>ACTIVITY REGULATION</scope>
    <source>
        <strain>Madrid E</strain>
    </source>
</reference>
<reference key="2">
    <citation type="journal article" date="1998" name="Nature">
        <title>The genome sequence of Rickettsia prowazekii and the origin of mitochondria.</title>
        <authorList>
            <person name="Andersson S.G.E."/>
            <person name="Zomorodipour A."/>
            <person name="Andersson J.O."/>
            <person name="Sicheritz-Ponten T."/>
            <person name="Alsmark U.C.M."/>
            <person name="Podowski R.M."/>
            <person name="Naeslund A.K."/>
            <person name="Eriksson A.-S."/>
            <person name="Winkler H.H."/>
            <person name="Kurland C.G."/>
        </authorList>
    </citation>
    <scope>NUCLEOTIDE SEQUENCE [LARGE SCALE GENOMIC DNA]</scope>
    <source>
        <strain>Madrid E</strain>
    </source>
</reference>
<dbReference type="EMBL" id="AJ235270">
    <property type="protein sequence ID" value="CAA14547.1"/>
    <property type="molecule type" value="Genomic_DNA"/>
</dbReference>
<dbReference type="PIR" id="D71716">
    <property type="entry name" value="D71716"/>
</dbReference>
<dbReference type="RefSeq" id="NP_220470.1">
    <property type="nucleotide sequence ID" value="NC_000963.1"/>
</dbReference>
<dbReference type="RefSeq" id="WP_004596540.1">
    <property type="nucleotide sequence ID" value="NC_000963.1"/>
</dbReference>
<dbReference type="SMR" id="Q9ZE70"/>
<dbReference type="STRING" id="272947.gene:17555159"/>
<dbReference type="TCDB" id="2.A.7.3.7">
    <property type="family name" value="the drug/metabolite transporter (dmt) superfamily"/>
</dbReference>
<dbReference type="EnsemblBacteria" id="CAA14547">
    <property type="protein sequence ID" value="CAA14547"/>
    <property type="gene ID" value="CAA14547"/>
</dbReference>
<dbReference type="KEGG" id="rpr:RP076"/>
<dbReference type="PATRIC" id="fig|272947.5.peg.77"/>
<dbReference type="eggNOG" id="COG0697">
    <property type="taxonomic scope" value="Bacteria"/>
</dbReference>
<dbReference type="HOGENOM" id="CLU_032828_0_0_5"/>
<dbReference type="OrthoDB" id="9812899at2"/>
<dbReference type="Proteomes" id="UP000002480">
    <property type="component" value="Chromosome"/>
</dbReference>
<dbReference type="GO" id="GO:0005886">
    <property type="term" value="C:plasma membrane"/>
    <property type="evidence" value="ECO:0007669"/>
    <property type="project" value="UniProtKB-SubCell"/>
</dbReference>
<dbReference type="GO" id="GO:0006865">
    <property type="term" value="P:amino acid transport"/>
    <property type="evidence" value="ECO:0007669"/>
    <property type="project" value="UniProtKB-KW"/>
</dbReference>
<dbReference type="InterPro" id="IPR000620">
    <property type="entry name" value="EamA_dom"/>
</dbReference>
<dbReference type="PANTHER" id="PTHR22911">
    <property type="entry name" value="ACYL-MALONYL CONDENSING ENZYME-RELATED"/>
    <property type="match status" value="1"/>
</dbReference>
<dbReference type="PANTHER" id="PTHR22911:SF6">
    <property type="entry name" value="SOLUTE CARRIER FAMILY 35 MEMBER G1"/>
    <property type="match status" value="1"/>
</dbReference>
<dbReference type="Pfam" id="PF00892">
    <property type="entry name" value="EamA"/>
    <property type="match status" value="2"/>
</dbReference>
<dbReference type="SUPFAM" id="SSF103481">
    <property type="entry name" value="Multidrug resistance efflux transporter EmrE"/>
    <property type="match status" value="2"/>
</dbReference>
<comment type="function">
    <text evidence="2">Transports S-adenosylmethionine.</text>
</comment>
<comment type="activity regulation">
    <text evidence="2">Transport is inhibited by S-adenosylethionine and to a lesser extent by S-adenosylhomocysteine. Unlike eukaryotic transporters is not inhibited by sinfungin. Also inhibited by 2.4-dinitrophenol, suggesting transport is an energy-dependent process.</text>
</comment>
<comment type="subcellular location">
    <subcellularLocation>
        <location evidence="3">Cell inner membrane</location>
        <topology evidence="3">Multi-pass membrane protein</topology>
    </subcellularLocation>
</comment>
<comment type="similarity">
    <text evidence="3">Belongs to the drug/metabolite transporter (DMT) superfamily. 10 TMS drug/metabolite exporter (DME) (TC 2.A.7.3) family.</text>
</comment>
<protein>
    <recommendedName>
        <fullName>S-adenosylmethionine uptake transporter</fullName>
    </recommendedName>
</protein>
<evidence type="ECO:0000255" key="1"/>
<evidence type="ECO:0000269" key="2">
    <source>
    </source>
</evidence>
<evidence type="ECO:0000305" key="3"/>
<keyword id="KW-0029">Amino-acid transport</keyword>
<keyword id="KW-0997">Cell inner membrane</keyword>
<keyword id="KW-1003">Cell membrane</keyword>
<keyword id="KW-0472">Membrane</keyword>
<keyword id="KW-1185">Reference proteome</keyword>
<keyword id="KW-0677">Repeat</keyword>
<keyword id="KW-0812">Transmembrane</keyword>
<keyword id="KW-1133">Transmembrane helix</keyword>
<keyword id="KW-0813">Transport</keyword>
<name>SAM_RICPR</name>
<feature type="chain" id="PRO_0000280997" description="S-adenosylmethionine uptake transporter">
    <location>
        <begin position="1"/>
        <end position="294"/>
    </location>
</feature>
<feature type="transmembrane region" description="Helical" evidence="1">
    <location>
        <begin position="4"/>
        <end position="24"/>
    </location>
</feature>
<feature type="transmembrane region" description="Helical" evidence="1">
    <location>
        <begin position="41"/>
        <end position="61"/>
    </location>
</feature>
<feature type="transmembrane region" description="Helical" evidence="1">
    <location>
        <begin position="74"/>
        <end position="91"/>
    </location>
</feature>
<feature type="transmembrane region" description="Helical" evidence="1">
    <location>
        <begin position="98"/>
        <end position="118"/>
    </location>
</feature>
<feature type="transmembrane region" description="Helical" evidence="1">
    <location>
        <begin position="121"/>
        <end position="141"/>
    </location>
</feature>
<feature type="transmembrane region" description="Helical" evidence="1">
    <location>
        <begin position="148"/>
        <end position="168"/>
    </location>
</feature>
<feature type="transmembrane region" description="Helical" evidence="1">
    <location>
        <begin position="178"/>
        <end position="198"/>
    </location>
</feature>
<feature type="transmembrane region" description="Helical" evidence="1">
    <location>
        <begin position="207"/>
        <end position="227"/>
    </location>
</feature>
<feature type="transmembrane region" description="Helical" evidence="1">
    <location>
        <begin position="237"/>
        <end position="257"/>
    </location>
</feature>
<feature type="transmembrane region" description="Helical" evidence="1">
    <location>
        <begin position="260"/>
        <end position="280"/>
    </location>
</feature>
<feature type="domain" description="EamA 1">
    <location>
        <begin position="22"/>
        <end position="141"/>
    </location>
</feature>
<feature type="domain" description="EamA 2">
    <location>
        <begin position="160"/>
        <end position="280"/>
    </location>
</feature>
<organism>
    <name type="scientific">Rickettsia prowazekii (strain Madrid E)</name>
    <dbReference type="NCBI Taxonomy" id="272947"/>
    <lineage>
        <taxon>Bacteria</taxon>
        <taxon>Pseudomonadati</taxon>
        <taxon>Pseudomonadota</taxon>
        <taxon>Alphaproteobacteria</taxon>
        <taxon>Rickettsiales</taxon>
        <taxon>Rickettsiaceae</taxon>
        <taxon>Rickettsieae</taxon>
        <taxon>Rickettsia</taxon>
        <taxon>typhus group</taxon>
    </lineage>
</organism>
<proteinExistence type="inferred from homology"/>
<gene>
    <name type="primary">sam</name>
    <name type="ordered locus">RP076</name>
</gene>
<sequence>MNDALKTYLNGICWFLLSLVTSSINDVMSKYLGTRLHSFEVAFFRFFFSSIVLLPFVVYYGKNALKTSRPFVHVLRGLLLFFGMTSWTYGLTIAPVTTATVVSFAIPLFTLILAVFILNENIIWQRWVVTVVGFIGLVVMLKPHTKDFNPEILYLILAAISFAMLDIINKKFVVKESMLSMLFYSAIVTAMVSLPVAMQYWITPSSFELALLFVLGSSGSFILFFLLKAFSIVDATATAPYRYLELVISAIAAYFIFNEFPDKSTVHGAVIIIPATLFIIYSEKKSMSSKHESQ</sequence>